<comment type="function">
    <text evidence="2">Component of the ubiquinol-cytochrome c reductase complex (complex III or cytochrome b-c1 complex) that is part of the mitochondrial respiratory chain. The b-c1 complex mediates electron transfer from ubiquinol to cytochrome c. Contributes to the generation of a proton gradient across the mitochondrial membrane that is then used for ATP synthesis.</text>
</comment>
<comment type="cofactor">
    <cofactor evidence="2">
        <name>heme b</name>
        <dbReference type="ChEBI" id="CHEBI:60344"/>
    </cofactor>
    <text evidence="2">Binds 2 heme b groups non-covalently.</text>
</comment>
<comment type="subunit">
    <text evidence="2">The cytochrome bc1 complex contains 11 subunits: 3 respiratory subunits (MT-CYB, CYC1 and UQCRFS1), 2 core proteins (UQCRC1 and UQCRC2) and 6 low-molecular weight proteins (UQCRH/QCR6, UQCRB/QCR7, UQCRQ/QCR8, UQCR10/QCR9, UQCR11/QCR10 and a cleavage product of UQCRFS1). This cytochrome bc1 complex then forms a dimer.</text>
</comment>
<comment type="subcellular location">
    <subcellularLocation>
        <location evidence="2">Mitochondrion inner membrane</location>
        <topology evidence="2">Multi-pass membrane protein</topology>
    </subcellularLocation>
</comment>
<comment type="miscellaneous">
    <text evidence="1">Heme 1 (or BL or b562) is low-potential and absorbs at about 562 nm, and heme 2 (or BH or b566) is high-potential and absorbs at about 566 nm.</text>
</comment>
<comment type="similarity">
    <text evidence="3 4">Belongs to the cytochrome b family.</text>
</comment>
<comment type="caution">
    <text evidence="2">The full-length protein contains only eight transmembrane helices, not nine as predicted by bioinformatics tools.</text>
</comment>
<keyword id="KW-0249">Electron transport</keyword>
<keyword id="KW-0349">Heme</keyword>
<keyword id="KW-0408">Iron</keyword>
<keyword id="KW-0472">Membrane</keyword>
<keyword id="KW-0479">Metal-binding</keyword>
<keyword id="KW-0496">Mitochondrion</keyword>
<keyword id="KW-0999">Mitochondrion inner membrane</keyword>
<keyword id="KW-0679">Respiratory chain</keyword>
<keyword id="KW-0812">Transmembrane</keyword>
<keyword id="KW-1133">Transmembrane helix</keyword>
<keyword id="KW-0813">Transport</keyword>
<keyword id="KW-0830">Ubiquinone</keyword>
<dbReference type="EMBL" id="AF271410">
    <property type="protein sequence ID" value="AAG17350.1"/>
    <property type="molecule type" value="Genomic_DNA"/>
</dbReference>
<dbReference type="SMR" id="Q9G9J6"/>
<dbReference type="GO" id="GO:0005743">
    <property type="term" value="C:mitochondrial inner membrane"/>
    <property type="evidence" value="ECO:0007669"/>
    <property type="project" value="UniProtKB-SubCell"/>
</dbReference>
<dbReference type="GO" id="GO:0045275">
    <property type="term" value="C:respiratory chain complex III"/>
    <property type="evidence" value="ECO:0007669"/>
    <property type="project" value="InterPro"/>
</dbReference>
<dbReference type="GO" id="GO:0046872">
    <property type="term" value="F:metal ion binding"/>
    <property type="evidence" value="ECO:0007669"/>
    <property type="project" value="UniProtKB-KW"/>
</dbReference>
<dbReference type="GO" id="GO:0008121">
    <property type="term" value="F:ubiquinol-cytochrome-c reductase activity"/>
    <property type="evidence" value="ECO:0007669"/>
    <property type="project" value="InterPro"/>
</dbReference>
<dbReference type="GO" id="GO:0006122">
    <property type="term" value="P:mitochondrial electron transport, ubiquinol to cytochrome c"/>
    <property type="evidence" value="ECO:0007669"/>
    <property type="project" value="TreeGrafter"/>
</dbReference>
<dbReference type="CDD" id="cd00290">
    <property type="entry name" value="cytochrome_b_C"/>
    <property type="match status" value="1"/>
</dbReference>
<dbReference type="CDD" id="cd00284">
    <property type="entry name" value="Cytochrome_b_N"/>
    <property type="match status" value="1"/>
</dbReference>
<dbReference type="FunFam" id="1.20.810.10:FF:000002">
    <property type="entry name" value="Cytochrome b"/>
    <property type="match status" value="1"/>
</dbReference>
<dbReference type="Gene3D" id="1.20.810.10">
    <property type="entry name" value="Cytochrome Bc1 Complex, Chain C"/>
    <property type="match status" value="1"/>
</dbReference>
<dbReference type="InterPro" id="IPR005798">
    <property type="entry name" value="Cyt_b/b6_C"/>
</dbReference>
<dbReference type="InterPro" id="IPR036150">
    <property type="entry name" value="Cyt_b/b6_C_sf"/>
</dbReference>
<dbReference type="InterPro" id="IPR005797">
    <property type="entry name" value="Cyt_b/b6_N"/>
</dbReference>
<dbReference type="InterPro" id="IPR027387">
    <property type="entry name" value="Cytb/b6-like_sf"/>
</dbReference>
<dbReference type="InterPro" id="IPR030689">
    <property type="entry name" value="Cytochrome_b"/>
</dbReference>
<dbReference type="InterPro" id="IPR048260">
    <property type="entry name" value="Cytochrome_b_C_euk/bac"/>
</dbReference>
<dbReference type="InterPro" id="IPR048259">
    <property type="entry name" value="Cytochrome_b_N_euk/bac"/>
</dbReference>
<dbReference type="InterPro" id="IPR016174">
    <property type="entry name" value="Di-haem_cyt_TM"/>
</dbReference>
<dbReference type="PANTHER" id="PTHR19271">
    <property type="entry name" value="CYTOCHROME B"/>
    <property type="match status" value="1"/>
</dbReference>
<dbReference type="PANTHER" id="PTHR19271:SF16">
    <property type="entry name" value="CYTOCHROME B"/>
    <property type="match status" value="1"/>
</dbReference>
<dbReference type="Pfam" id="PF00032">
    <property type="entry name" value="Cytochrom_B_C"/>
    <property type="match status" value="1"/>
</dbReference>
<dbReference type="Pfam" id="PF00033">
    <property type="entry name" value="Cytochrome_B"/>
    <property type="match status" value="1"/>
</dbReference>
<dbReference type="PIRSF" id="PIRSF038885">
    <property type="entry name" value="COB"/>
    <property type="match status" value="1"/>
</dbReference>
<dbReference type="SUPFAM" id="SSF81648">
    <property type="entry name" value="a domain/subunit of cytochrome bc1 complex (Ubiquinol-cytochrome c reductase)"/>
    <property type="match status" value="1"/>
</dbReference>
<dbReference type="SUPFAM" id="SSF81342">
    <property type="entry name" value="Transmembrane di-heme cytochromes"/>
    <property type="match status" value="1"/>
</dbReference>
<dbReference type="PROSITE" id="PS51003">
    <property type="entry name" value="CYTB_CTER"/>
    <property type="match status" value="1"/>
</dbReference>
<dbReference type="PROSITE" id="PS51002">
    <property type="entry name" value="CYTB_NTER"/>
    <property type="match status" value="1"/>
</dbReference>
<feature type="chain" id="PRO_0000060990" description="Cytochrome b">
    <location>
        <begin position="1"/>
        <end position="379"/>
    </location>
</feature>
<feature type="transmembrane region" description="Helical" evidence="2">
    <location>
        <begin position="33"/>
        <end position="53"/>
    </location>
</feature>
<feature type="transmembrane region" description="Helical" evidence="2">
    <location>
        <begin position="77"/>
        <end position="98"/>
    </location>
</feature>
<feature type="transmembrane region" description="Helical" evidence="2">
    <location>
        <begin position="113"/>
        <end position="133"/>
    </location>
</feature>
<feature type="transmembrane region" description="Helical" evidence="2">
    <location>
        <begin position="178"/>
        <end position="198"/>
    </location>
</feature>
<feature type="transmembrane region" description="Helical" evidence="2">
    <location>
        <begin position="226"/>
        <end position="246"/>
    </location>
</feature>
<feature type="transmembrane region" description="Helical" evidence="2">
    <location>
        <begin position="288"/>
        <end position="308"/>
    </location>
</feature>
<feature type="transmembrane region" description="Helical" evidence="2">
    <location>
        <begin position="320"/>
        <end position="340"/>
    </location>
</feature>
<feature type="transmembrane region" description="Helical" evidence="2">
    <location>
        <begin position="347"/>
        <end position="367"/>
    </location>
</feature>
<feature type="binding site" description="axial binding residue" evidence="2">
    <location>
        <position position="83"/>
    </location>
    <ligand>
        <name>heme b</name>
        <dbReference type="ChEBI" id="CHEBI:60344"/>
        <label>b562</label>
    </ligand>
    <ligandPart>
        <name>Fe</name>
        <dbReference type="ChEBI" id="CHEBI:18248"/>
    </ligandPart>
</feature>
<feature type="binding site" description="axial binding residue" evidence="2">
    <location>
        <position position="97"/>
    </location>
    <ligand>
        <name>heme b</name>
        <dbReference type="ChEBI" id="CHEBI:60344"/>
        <label>b566</label>
    </ligand>
    <ligandPart>
        <name>Fe</name>
        <dbReference type="ChEBI" id="CHEBI:18248"/>
    </ligandPart>
</feature>
<feature type="binding site" description="axial binding residue" evidence="2">
    <location>
        <position position="182"/>
    </location>
    <ligand>
        <name>heme b</name>
        <dbReference type="ChEBI" id="CHEBI:60344"/>
        <label>b562</label>
    </ligand>
    <ligandPart>
        <name>Fe</name>
        <dbReference type="ChEBI" id="CHEBI:18248"/>
    </ligandPart>
</feature>
<feature type="binding site" description="axial binding residue" evidence="2">
    <location>
        <position position="196"/>
    </location>
    <ligand>
        <name>heme b</name>
        <dbReference type="ChEBI" id="CHEBI:60344"/>
        <label>b566</label>
    </ligand>
    <ligandPart>
        <name>Fe</name>
        <dbReference type="ChEBI" id="CHEBI:18248"/>
    </ligandPart>
</feature>
<feature type="binding site" evidence="2">
    <location>
        <position position="201"/>
    </location>
    <ligand>
        <name>a ubiquinone</name>
        <dbReference type="ChEBI" id="CHEBI:16389"/>
    </ligand>
</feature>
<reference key="1">
    <citation type="journal article" date="2001" name="Syst. Biol.">
        <title>Failure of the ILD to determine data combinability for slow loris phylogeny.</title>
        <authorList>
            <person name="Yoder A.D."/>
            <person name="Irwin J.A."/>
            <person name="Payseur B.A."/>
        </authorList>
    </citation>
    <scope>NUCLEOTIDE SEQUENCE [GENOMIC DNA]</scope>
    <source>
        <strain>Isolate DUPC 2006</strain>
    </source>
</reference>
<gene>
    <name type="primary">MT-CYB</name>
    <name type="synonym">COB</name>
    <name type="synonym">CYTB</name>
    <name type="synonym">MTCYB</name>
</gene>
<evidence type="ECO:0000250" key="1"/>
<evidence type="ECO:0000250" key="2">
    <source>
        <dbReference type="UniProtKB" id="P00157"/>
    </source>
</evidence>
<evidence type="ECO:0000255" key="3">
    <source>
        <dbReference type="PROSITE-ProRule" id="PRU00967"/>
    </source>
</evidence>
<evidence type="ECO:0000255" key="4">
    <source>
        <dbReference type="PROSITE-ProRule" id="PRU00968"/>
    </source>
</evidence>
<name>CYB_GALMO</name>
<sequence>MTNIRKQHPLAKMINHSFIDLPAPSNISSWWNFGSLLGLCLMIQIITGLFLAMHYSSDTSTAFSSVTHICRDVNYGWIIRYLHANGASMFFICLFTHIGRGLYYGSFTFLETWNIGIILLFTVMATAFMGYVLPWGQMSFWGATVITNLLSAIPYMGTGLVEWIWGGFSVDKATLTRFFAFHFILPFIIAALAMIHLLFLHETGSNNPSGISSDSDKIPFHPYYTIKDLLGAILLLLSLFSLVLFSPDLLGDPDNYIPANPLNTPPHIKPEWYFLFAYAILRSIPNKLGGVLALVSSILILALIPYLHTAKQRSMMFRPLSQCLYWMLVADLFTLTWIGGQPVENPFITIGQTASIIYFLIVLILMPLTNLLENKLLKW</sequence>
<accession>Q9G9J6</accession>
<proteinExistence type="inferred from homology"/>
<organism>
    <name type="scientific">Galago moholi</name>
    <name type="common">South African galago</name>
    <name type="synonym">South African lesser bushbaby</name>
    <dbReference type="NCBI Taxonomy" id="30609"/>
    <lineage>
        <taxon>Eukaryota</taxon>
        <taxon>Metazoa</taxon>
        <taxon>Chordata</taxon>
        <taxon>Craniata</taxon>
        <taxon>Vertebrata</taxon>
        <taxon>Euteleostomi</taxon>
        <taxon>Mammalia</taxon>
        <taxon>Eutheria</taxon>
        <taxon>Euarchontoglires</taxon>
        <taxon>Primates</taxon>
        <taxon>Strepsirrhini</taxon>
        <taxon>Lorisiformes</taxon>
        <taxon>Galagidae</taxon>
        <taxon>Galago</taxon>
    </lineage>
</organism>
<protein>
    <recommendedName>
        <fullName>Cytochrome b</fullName>
    </recommendedName>
    <alternativeName>
        <fullName>Complex III subunit 3</fullName>
    </alternativeName>
    <alternativeName>
        <fullName>Complex III subunit III</fullName>
    </alternativeName>
    <alternativeName>
        <fullName>Cytochrome b-c1 complex subunit 3</fullName>
    </alternativeName>
    <alternativeName>
        <fullName>Ubiquinol-cytochrome-c reductase complex cytochrome b subunit</fullName>
    </alternativeName>
</protein>
<geneLocation type="mitochondrion"/>